<dbReference type="EMBL" id="CU459141">
    <property type="protein sequence ID" value="CAM87967.1"/>
    <property type="molecule type" value="Genomic_DNA"/>
</dbReference>
<dbReference type="RefSeq" id="WP_000126166.1">
    <property type="nucleotide sequence ID" value="NZ_JBDGFB010000020.1"/>
</dbReference>
<dbReference type="SMR" id="B0V5Q4"/>
<dbReference type="EnsemblBacteria" id="CAM87967">
    <property type="protein sequence ID" value="CAM87967"/>
    <property type="gene ID" value="ABAYE3158"/>
</dbReference>
<dbReference type="KEGG" id="aby:ABAYE3158"/>
<dbReference type="HOGENOM" id="CLU_105066_1_3_6"/>
<dbReference type="GO" id="GO:0005829">
    <property type="term" value="C:cytosol"/>
    <property type="evidence" value="ECO:0007669"/>
    <property type="project" value="TreeGrafter"/>
</dbReference>
<dbReference type="GO" id="GO:0003677">
    <property type="term" value="F:DNA binding"/>
    <property type="evidence" value="ECO:0007669"/>
    <property type="project" value="UniProtKB-UniRule"/>
</dbReference>
<dbReference type="GO" id="GO:0030527">
    <property type="term" value="F:structural constituent of chromatin"/>
    <property type="evidence" value="ECO:0007669"/>
    <property type="project" value="InterPro"/>
</dbReference>
<dbReference type="GO" id="GO:0006310">
    <property type="term" value="P:DNA recombination"/>
    <property type="evidence" value="ECO:0007669"/>
    <property type="project" value="UniProtKB-UniRule"/>
</dbReference>
<dbReference type="GO" id="GO:0009893">
    <property type="term" value="P:positive regulation of metabolic process"/>
    <property type="evidence" value="ECO:0007669"/>
    <property type="project" value="UniProtKB-ARBA"/>
</dbReference>
<dbReference type="GO" id="GO:0006355">
    <property type="term" value="P:regulation of DNA-templated transcription"/>
    <property type="evidence" value="ECO:0007669"/>
    <property type="project" value="UniProtKB-UniRule"/>
</dbReference>
<dbReference type="GO" id="GO:0006417">
    <property type="term" value="P:regulation of translation"/>
    <property type="evidence" value="ECO:0007669"/>
    <property type="project" value="UniProtKB-UniRule"/>
</dbReference>
<dbReference type="CDD" id="cd13835">
    <property type="entry name" value="IHF_A"/>
    <property type="match status" value="1"/>
</dbReference>
<dbReference type="FunFam" id="4.10.520.10:FF:000002">
    <property type="entry name" value="Integration host factor subunit alpha"/>
    <property type="match status" value="1"/>
</dbReference>
<dbReference type="Gene3D" id="4.10.520.10">
    <property type="entry name" value="IHF-like DNA-binding proteins"/>
    <property type="match status" value="1"/>
</dbReference>
<dbReference type="HAMAP" id="MF_00380">
    <property type="entry name" value="IHF_alpha"/>
    <property type="match status" value="1"/>
</dbReference>
<dbReference type="InterPro" id="IPR000119">
    <property type="entry name" value="Hist_DNA-bd"/>
</dbReference>
<dbReference type="InterPro" id="IPR020816">
    <property type="entry name" value="Histone-like_DNA-bd_CS"/>
</dbReference>
<dbReference type="InterPro" id="IPR010992">
    <property type="entry name" value="IHF-like_DNA-bd_dom_sf"/>
</dbReference>
<dbReference type="InterPro" id="IPR005684">
    <property type="entry name" value="IHF_alpha"/>
</dbReference>
<dbReference type="NCBIfam" id="TIGR00987">
    <property type="entry name" value="himA"/>
    <property type="match status" value="1"/>
</dbReference>
<dbReference type="NCBIfam" id="NF001401">
    <property type="entry name" value="PRK00285.1"/>
    <property type="match status" value="1"/>
</dbReference>
<dbReference type="PANTHER" id="PTHR33175">
    <property type="entry name" value="DNA-BINDING PROTEIN HU"/>
    <property type="match status" value="1"/>
</dbReference>
<dbReference type="PANTHER" id="PTHR33175:SF2">
    <property type="entry name" value="INTEGRATION HOST FACTOR SUBUNIT ALPHA"/>
    <property type="match status" value="1"/>
</dbReference>
<dbReference type="Pfam" id="PF00216">
    <property type="entry name" value="Bac_DNA_binding"/>
    <property type="match status" value="1"/>
</dbReference>
<dbReference type="PRINTS" id="PR01727">
    <property type="entry name" value="DNABINDINGHU"/>
</dbReference>
<dbReference type="SMART" id="SM00411">
    <property type="entry name" value="BHL"/>
    <property type="match status" value="1"/>
</dbReference>
<dbReference type="SUPFAM" id="SSF47729">
    <property type="entry name" value="IHF-like DNA-binding proteins"/>
    <property type="match status" value="1"/>
</dbReference>
<dbReference type="PROSITE" id="PS00045">
    <property type="entry name" value="HISTONE_LIKE"/>
    <property type="match status" value="1"/>
</dbReference>
<organism>
    <name type="scientific">Acinetobacter baumannii (strain AYE)</name>
    <dbReference type="NCBI Taxonomy" id="509173"/>
    <lineage>
        <taxon>Bacteria</taxon>
        <taxon>Pseudomonadati</taxon>
        <taxon>Pseudomonadota</taxon>
        <taxon>Gammaproteobacteria</taxon>
        <taxon>Moraxellales</taxon>
        <taxon>Moraxellaceae</taxon>
        <taxon>Acinetobacter</taxon>
        <taxon>Acinetobacter calcoaceticus/baumannii complex</taxon>
    </lineage>
</organism>
<proteinExistence type="inferred from homology"/>
<accession>B0V5Q4</accession>
<gene>
    <name evidence="1" type="primary">ihfA</name>
    <name evidence="1" type="synonym">himA</name>
    <name type="ordered locus">ABAYE3158</name>
</gene>
<name>IHFA_ACIBY</name>
<protein>
    <recommendedName>
        <fullName evidence="1">Integration host factor subunit alpha</fullName>
        <shortName evidence="1">IHF-alpha</shortName>
    </recommendedName>
</protein>
<comment type="function">
    <text evidence="1">This protein is one of the two subunits of integration host factor, a specific DNA-binding protein that functions in genetic recombination as well as in transcriptional and translational control.</text>
</comment>
<comment type="subunit">
    <text evidence="1">Heterodimer of an alpha and a beta chain.</text>
</comment>
<comment type="similarity">
    <text evidence="1">Belongs to the bacterial histone-like protein family.</text>
</comment>
<sequence length="98" mass="11178">MTALTKADMADHLSELTSLNRREAKQMVELFFDEISQALIAGEQVKLSGFGNFELRDKRERPGRNPKTGEEIPISARRVVTFRAGQKFRQRVGNEQID</sequence>
<feature type="chain" id="PRO_1000122124" description="Integration host factor subunit alpha">
    <location>
        <begin position="1"/>
        <end position="98"/>
    </location>
</feature>
<evidence type="ECO:0000255" key="1">
    <source>
        <dbReference type="HAMAP-Rule" id="MF_00380"/>
    </source>
</evidence>
<keyword id="KW-0233">DNA recombination</keyword>
<keyword id="KW-0238">DNA-binding</keyword>
<keyword id="KW-0804">Transcription</keyword>
<keyword id="KW-0805">Transcription regulation</keyword>
<keyword id="KW-0810">Translation regulation</keyword>
<reference key="1">
    <citation type="journal article" date="2008" name="PLoS ONE">
        <title>Comparative analysis of Acinetobacters: three genomes for three lifestyles.</title>
        <authorList>
            <person name="Vallenet D."/>
            <person name="Nordmann P."/>
            <person name="Barbe V."/>
            <person name="Poirel L."/>
            <person name="Mangenot S."/>
            <person name="Bataille E."/>
            <person name="Dossat C."/>
            <person name="Gas S."/>
            <person name="Kreimeyer A."/>
            <person name="Lenoble P."/>
            <person name="Oztas S."/>
            <person name="Poulain J."/>
            <person name="Segurens B."/>
            <person name="Robert C."/>
            <person name="Abergel C."/>
            <person name="Claverie J.-M."/>
            <person name="Raoult D."/>
            <person name="Medigue C."/>
            <person name="Weissenbach J."/>
            <person name="Cruveiller S."/>
        </authorList>
    </citation>
    <scope>NUCLEOTIDE SEQUENCE [LARGE SCALE GENOMIC DNA]</scope>
    <source>
        <strain>AYE</strain>
    </source>
</reference>